<accession>A0QSL5</accession>
<accession>I7FGI4</accession>
<proteinExistence type="evidence at protein level"/>
<gene>
    <name evidence="1" type="primary">rpsM</name>
    <name type="ordered locus">MSMEG_1521</name>
    <name type="ordered locus">MSMEI_1485</name>
</gene>
<reference key="1">
    <citation type="submission" date="2006-10" db="EMBL/GenBank/DDBJ databases">
        <authorList>
            <person name="Fleischmann R.D."/>
            <person name="Dodson R.J."/>
            <person name="Haft D.H."/>
            <person name="Merkel J.S."/>
            <person name="Nelson W.C."/>
            <person name="Fraser C.M."/>
        </authorList>
    </citation>
    <scope>NUCLEOTIDE SEQUENCE [LARGE SCALE GENOMIC DNA]</scope>
    <source>
        <strain>ATCC 700084 / mc(2)155</strain>
    </source>
</reference>
<reference key="2">
    <citation type="journal article" date="2007" name="Genome Biol.">
        <title>Interrupted coding sequences in Mycobacterium smegmatis: authentic mutations or sequencing errors?</title>
        <authorList>
            <person name="Deshayes C."/>
            <person name="Perrodou E."/>
            <person name="Gallien S."/>
            <person name="Euphrasie D."/>
            <person name="Schaeffer C."/>
            <person name="Van-Dorsselaer A."/>
            <person name="Poch O."/>
            <person name="Lecompte O."/>
            <person name="Reyrat J.-M."/>
        </authorList>
    </citation>
    <scope>NUCLEOTIDE SEQUENCE [LARGE SCALE GENOMIC DNA]</scope>
    <source>
        <strain>ATCC 700084 / mc(2)155</strain>
    </source>
</reference>
<reference key="3">
    <citation type="journal article" date="2009" name="Genome Res.">
        <title>Ortho-proteogenomics: multiple proteomes investigation through orthology and a new MS-based protocol.</title>
        <authorList>
            <person name="Gallien S."/>
            <person name="Perrodou E."/>
            <person name="Carapito C."/>
            <person name="Deshayes C."/>
            <person name="Reyrat J.-M."/>
            <person name="Van Dorsselaer A."/>
            <person name="Poch O."/>
            <person name="Schaeffer C."/>
            <person name="Lecompte O."/>
        </authorList>
    </citation>
    <scope>NUCLEOTIDE SEQUENCE [LARGE SCALE GENOMIC DNA]</scope>
    <scope>IDENTIFICATION BY MASS SPECTROMETRY [LARGE SCALE ANALYSIS]</scope>
    <source>
        <strain>ATCC 700084 / mc(2)155</strain>
    </source>
</reference>
<dbReference type="EMBL" id="CP000480">
    <property type="protein sequence ID" value="ABK76170.1"/>
    <property type="molecule type" value="Genomic_DNA"/>
</dbReference>
<dbReference type="EMBL" id="CP001663">
    <property type="protein sequence ID" value="AFP37958.1"/>
    <property type="molecule type" value="Genomic_DNA"/>
</dbReference>
<dbReference type="RefSeq" id="WP_004571523.1">
    <property type="nucleotide sequence ID" value="NZ_SIJM01000016.1"/>
</dbReference>
<dbReference type="RefSeq" id="YP_885903.1">
    <property type="nucleotide sequence ID" value="NC_008596.1"/>
</dbReference>
<dbReference type="PDB" id="5O5J">
    <property type="method" value="EM"/>
    <property type="resolution" value="3.45 A"/>
    <property type="chains" value="M=1-124"/>
</dbReference>
<dbReference type="PDB" id="5O61">
    <property type="method" value="EM"/>
    <property type="resolution" value="3.31 A"/>
    <property type="chains" value="BM=1-124"/>
</dbReference>
<dbReference type="PDB" id="5XYU">
    <property type="method" value="EM"/>
    <property type="resolution" value="3.45 A"/>
    <property type="chains" value="M=1-124"/>
</dbReference>
<dbReference type="PDB" id="5ZEB">
    <property type="method" value="EM"/>
    <property type="resolution" value="3.40 A"/>
    <property type="chains" value="m=1-124"/>
</dbReference>
<dbReference type="PDB" id="5ZEP">
    <property type="method" value="EM"/>
    <property type="resolution" value="3.40 A"/>
    <property type="chains" value="m=1-124"/>
</dbReference>
<dbReference type="PDB" id="5ZEU">
    <property type="method" value="EM"/>
    <property type="resolution" value="3.70 A"/>
    <property type="chains" value="m=1-124"/>
</dbReference>
<dbReference type="PDB" id="6DZI">
    <property type="method" value="EM"/>
    <property type="resolution" value="3.46 A"/>
    <property type="chains" value="v=2-117"/>
</dbReference>
<dbReference type="PDB" id="6DZK">
    <property type="method" value="EM"/>
    <property type="resolution" value="3.60 A"/>
    <property type="chains" value="M=1-124"/>
</dbReference>
<dbReference type="PDB" id="8FR8">
    <property type="method" value="EM"/>
    <property type="resolution" value="2.76 A"/>
    <property type="chains" value="j=2-117"/>
</dbReference>
<dbReference type="PDB" id="8V9J">
    <property type="method" value="EM"/>
    <property type="resolution" value="3.10 A"/>
    <property type="chains" value="m=1-124"/>
</dbReference>
<dbReference type="PDB" id="8V9K">
    <property type="method" value="EM"/>
    <property type="resolution" value="3.10 A"/>
    <property type="chains" value="m=1-124"/>
</dbReference>
<dbReference type="PDB" id="8V9L">
    <property type="method" value="EM"/>
    <property type="resolution" value="3.00 A"/>
    <property type="chains" value="m=1-124"/>
</dbReference>
<dbReference type="PDB" id="8VIO">
    <property type="method" value="EM"/>
    <property type="resolution" value="3.26 A"/>
    <property type="chains" value="t=1-124"/>
</dbReference>
<dbReference type="PDB" id="8WHX">
    <property type="method" value="EM"/>
    <property type="resolution" value="2.80 A"/>
    <property type="chains" value="n=1-124"/>
</dbReference>
<dbReference type="PDB" id="8WI7">
    <property type="method" value="EM"/>
    <property type="resolution" value="3.50 A"/>
    <property type="chains" value="n=1-124"/>
</dbReference>
<dbReference type="PDB" id="8WI9">
    <property type="method" value="EM"/>
    <property type="resolution" value="3.50 A"/>
    <property type="chains" value="n=1-124"/>
</dbReference>
<dbReference type="PDB" id="8WIB">
    <property type="method" value="EM"/>
    <property type="resolution" value="3.50 A"/>
    <property type="chains" value="n=1-124"/>
</dbReference>
<dbReference type="PDB" id="8WID">
    <property type="method" value="EM"/>
    <property type="resolution" value="3.50 A"/>
    <property type="chains" value="n=1-124"/>
</dbReference>
<dbReference type="PDB" id="8WIF">
    <property type="method" value="EM"/>
    <property type="resolution" value="2.90 A"/>
    <property type="chains" value="n=1-124"/>
</dbReference>
<dbReference type="PDBsum" id="5O5J"/>
<dbReference type="PDBsum" id="5O61"/>
<dbReference type="PDBsum" id="5XYU"/>
<dbReference type="PDBsum" id="5ZEB"/>
<dbReference type="PDBsum" id="5ZEP"/>
<dbReference type="PDBsum" id="5ZEU"/>
<dbReference type="PDBsum" id="6DZI"/>
<dbReference type="PDBsum" id="6DZK"/>
<dbReference type="PDBsum" id="8FR8"/>
<dbReference type="PDBsum" id="8V9J"/>
<dbReference type="PDBsum" id="8V9K"/>
<dbReference type="PDBsum" id="8V9L"/>
<dbReference type="PDBsum" id="8VIO"/>
<dbReference type="PDBsum" id="8WHX"/>
<dbReference type="PDBsum" id="8WI7"/>
<dbReference type="PDBsum" id="8WI9"/>
<dbReference type="PDBsum" id="8WIB"/>
<dbReference type="PDBsum" id="8WID"/>
<dbReference type="PDBsum" id="8WIF"/>
<dbReference type="EMDB" id="EMD-29397"/>
<dbReference type="EMDB" id="EMD-3748"/>
<dbReference type="EMDB" id="EMD-3751"/>
<dbReference type="EMDB" id="EMD-37551"/>
<dbReference type="EMDB" id="EMD-37559"/>
<dbReference type="EMDB" id="EMD-37561"/>
<dbReference type="EMDB" id="EMD-37562"/>
<dbReference type="EMDB" id="EMD-37564"/>
<dbReference type="EMDB" id="EMD-37565"/>
<dbReference type="EMDB" id="EMD-43074"/>
<dbReference type="EMDB" id="EMD-43075"/>
<dbReference type="EMDB" id="EMD-43076"/>
<dbReference type="EMDB" id="EMD-43267"/>
<dbReference type="EMDB" id="EMD-6790"/>
<dbReference type="EMDB" id="EMD-6920"/>
<dbReference type="EMDB" id="EMD-6921"/>
<dbReference type="EMDB" id="EMD-6923"/>
<dbReference type="EMDB" id="EMD-8932"/>
<dbReference type="EMDB" id="EMD-8934"/>
<dbReference type="SMR" id="A0QSL5"/>
<dbReference type="IntAct" id="A0QSL5">
    <property type="interactions" value="1"/>
</dbReference>
<dbReference type="STRING" id="246196.MSMEG_1521"/>
<dbReference type="PaxDb" id="246196-MSMEI_1485"/>
<dbReference type="GeneID" id="93456363"/>
<dbReference type="KEGG" id="msb:LJ00_07600"/>
<dbReference type="KEGG" id="msg:MSMEI_1485"/>
<dbReference type="KEGG" id="msm:MSMEG_1521"/>
<dbReference type="PATRIC" id="fig|246196.19.peg.1506"/>
<dbReference type="eggNOG" id="COG0099">
    <property type="taxonomic scope" value="Bacteria"/>
</dbReference>
<dbReference type="OrthoDB" id="9803610at2"/>
<dbReference type="Proteomes" id="UP000000757">
    <property type="component" value="Chromosome"/>
</dbReference>
<dbReference type="Proteomes" id="UP000006158">
    <property type="component" value="Chromosome"/>
</dbReference>
<dbReference type="GO" id="GO:0005829">
    <property type="term" value="C:cytosol"/>
    <property type="evidence" value="ECO:0007669"/>
    <property type="project" value="TreeGrafter"/>
</dbReference>
<dbReference type="GO" id="GO:0015935">
    <property type="term" value="C:small ribosomal subunit"/>
    <property type="evidence" value="ECO:0007669"/>
    <property type="project" value="TreeGrafter"/>
</dbReference>
<dbReference type="GO" id="GO:0019843">
    <property type="term" value="F:rRNA binding"/>
    <property type="evidence" value="ECO:0007669"/>
    <property type="project" value="UniProtKB-UniRule"/>
</dbReference>
<dbReference type="GO" id="GO:0003735">
    <property type="term" value="F:structural constituent of ribosome"/>
    <property type="evidence" value="ECO:0007669"/>
    <property type="project" value="InterPro"/>
</dbReference>
<dbReference type="GO" id="GO:0000049">
    <property type="term" value="F:tRNA binding"/>
    <property type="evidence" value="ECO:0007669"/>
    <property type="project" value="UniProtKB-UniRule"/>
</dbReference>
<dbReference type="GO" id="GO:0006412">
    <property type="term" value="P:translation"/>
    <property type="evidence" value="ECO:0007669"/>
    <property type="project" value="UniProtKB-UniRule"/>
</dbReference>
<dbReference type="FunFam" id="1.10.8.50:FF:000001">
    <property type="entry name" value="30S ribosomal protein S13"/>
    <property type="match status" value="1"/>
</dbReference>
<dbReference type="FunFam" id="4.10.910.10:FF:000001">
    <property type="entry name" value="30S ribosomal protein S13"/>
    <property type="match status" value="1"/>
</dbReference>
<dbReference type="Gene3D" id="1.10.8.50">
    <property type="match status" value="1"/>
</dbReference>
<dbReference type="Gene3D" id="4.10.910.10">
    <property type="entry name" value="30s ribosomal protein s13, domain 2"/>
    <property type="match status" value="1"/>
</dbReference>
<dbReference type="HAMAP" id="MF_01315">
    <property type="entry name" value="Ribosomal_uS13"/>
    <property type="match status" value="1"/>
</dbReference>
<dbReference type="InterPro" id="IPR027437">
    <property type="entry name" value="Rbsml_uS13_C"/>
</dbReference>
<dbReference type="InterPro" id="IPR001892">
    <property type="entry name" value="Ribosomal_uS13"/>
</dbReference>
<dbReference type="InterPro" id="IPR010979">
    <property type="entry name" value="Ribosomal_uS13-like_H2TH"/>
</dbReference>
<dbReference type="InterPro" id="IPR019980">
    <property type="entry name" value="Ribosomal_uS13_bac-type"/>
</dbReference>
<dbReference type="InterPro" id="IPR018269">
    <property type="entry name" value="Ribosomal_uS13_CS"/>
</dbReference>
<dbReference type="NCBIfam" id="TIGR03631">
    <property type="entry name" value="uS13_bact"/>
    <property type="match status" value="1"/>
</dbReference>
<dbReference type="PANTHER" id="PTHR10871">
    <property type="entry name" value="30S RIBOSOMAL PROTEIN S13/40S RIBOSOMAL PROTEIN S18"/>
    <property type="match status" value="1"/>
</dbReference>
<dbReference type="PANTHER" id="PTHR10871:SF1">
    <property type="entry name" value="SMALL RIBOSOMAL SUBUNIT PROTEIN US13M"/>
    <property type="match status" value="1"/>
</dbReference>
<dbReference type="Pfam" id="PF00416">
    <property type="entry name" value="Ribosomal_S13"/>
    <property type="match status" value="1"/>
</dbReference>
<dbReference type="PIRSF" id="PIRSF002134">
    <property type="entry name" value="Ribosomal_S13"/>
    <property type="match status" value="1"/>
</dbReference>
<dbReference type="SUPFAM" id="SSF46946">
    <property type="entry name" value="S13-like H2TH domain"/>
    <property type="match status" value="1"/>
</dbReference>
<dbReference type="PROSITE" id="PS00646">
    <property type="entry name" value="RIBOSOMAL_S13_1"/>
    <property type="match status" value="1"/>
</dbReference>
<dbReference type="PROSITE" id="PS50159">
    <property type="entry name" value="RIBOSOMAL_S13_2"/>
    <property type="match status" value="1"/>
</dbReference>
<comment type="function">
    <text evidence="1">Located at the top of the head of the 30S subunit, it contacts several helices of the 16S rRNA. In the 70S ribosome it contacts the 23S rRNA (bridge B1a) and protein L5 of the 50S subunit (bridge B1b), connecting the 2 subunits; these bridges are implicated in subunit movement. Contacts the tRNAs in the A and P-sites.</text>
</comment>
<comment type="subunit">
    <text evidence="1">Part of the 30S ribosomal subunit. Forms a loose heterodimer with protein S19. Forms two bridges to the 50S subunit in the 70S ribosome.</text>
</comment>
<comment type="similarity">
    <text evidence="1">Belongs to the universal ribosomal protein uS13 family.</text>
</comment>
<evidence type="ECO:0000255" key="1">
    <source>
        <dbReference type="HAMAP-Rule" id="MF_01315"/>
    </source>
</evidence>
<evidence type="ECO:0000256" key="2">
    <source>
        <dbReference type="SAM" id="MobiDB-lite"/>
    </source>
</evidence>
<evidence type="ECO:0000305" key="3"/>
<evidence type="ECO:0007829" key="4">
    <source>
        <dbReference type="PDB" id="5XYU"/>
    </source>
</evidence>
<sequence length="124" mass="14218">MARLVGVDLPRDKRMEIALTYIYGIGRTRSNEILAATGIDKNMRTKDLTDDQVTVLRDYIEGNLKVEGDLRREVQADIRRKIEIGCYQGLRHRRGLPVRGQRTKTNARTRKGPKRTIAGKKKAR</sequence>
<feature type="chain" id="PRO_0000306648" description="Small ribosomal subunit protein uS13">
    <location>
        <begin position="1"/>
        <end position="124"/>
    </location>
</feature>
<feature type="region of interest" description="Disordered" evidence="2">
    <location>
        <begin position="95"/>
        <end position="124"/>
    </location>
</feature>
<feature type="turn" evidence="4">
    <location>
        <begin position="4"/>
        <end position="6"/>
    </location>
</feature>
<feature type="strand" evidence="4">
    <location>
        <begin position="12"/>
        <end position="14"/>
    </location>
</feature>
<feature type="helix" evidence="4">
    <location>
        <begin position="15"/>
        <end position="18"/>
    </location>
</feature>
<feature type="helix" evidence="4">
    <location>
        <begin position="19"/>
        <end position="21"/>
    </location>
</feature>
<feature type="helix" evidence="4">
    <location>
        <begin position="27"/>
        <end position="36"/>
    </location>
</feature>
<feature type="strand" evidence="4">
    <location>
        <begin position="44"/>
        <end position="48"/>
    </location>
</feature>
<feature type="helix" evidence="4">
    <location>
        <begin position="50"/>
        <end position="63"/>
    </location>
</feature>
<feature type="helix" evidence="4">
    <location>
        <begin position="68"/>
        <end position="83"/>
    </location>
</feature>
<feature type="helix" evidence="4">
    <location>
        <begin position="87"/>
        <end position="90"/>
    </location>
</feature>
<feature type="turn" evidence="4">
    <location>
        <begin position="91"/>
        <end position="95"/>
    </location>
</feature>
<feature type="strand" evidence="4">
    <location>
        <begin position="98"/>
        <end position="100"/>
    </location>
</feature>
<feature type="helix" evidence="4">
    <location>
        <begin position="108"/>
        <end position="111"/>
    </location>
</feature>
<keyword id="KW-0002">3D-structure</keyword>
<keyword id="KW-1185">Reference proteome</keyword>
<keyword id="KW-0687">Ribonucleoprotein</keyword>
<keyword id="KW-0689">Ribosomal protein</keyword>
<keyword id="KW-0694">RNA-binding</keyword>
<keyword id="KW-0699">rRNA-binding</keyword>
<keyword id="KW-0820">tRNA-binding</keyword>
<name>RS13_MYCS2</name>
<organism>
    <name type="scientific">Mycolicibacterium smegmatis (strain ATCC 700084 / mc(2)155)</name>
    <name type="common">Mycobacterium smegmatis</name>
    <dbReference type="NCBI Taxonomy" id="246196"/>
    <lineage>
        <taxon>Bacteria</taxon>
        <taxon>Bacillati</taxon>
        <taxon>Actinomycetota</taxon>
        <taxon>Actinomycetes</taxon>
        <taxon>Mycobacteriales</taxon>
        <taxon>Mycobacteriaceae</taxon>
        <taxon>Mycolicibacterium</taxon>
    </lineage>
</organism>
<protein>
    <recommendedName>
        <fullName evidence="1">Small ribosomal subunit protein uS13</fullName>
    </recommendedName>
    <alternativeName>
        <fullName evidence="3">30S ribosomal protein S13</fullName>
    </alternativeName>
</protein>